<sequence>MSEGQINLAMVWSRVLDNLDNNSLPPQHRAWLPQTRPLGLIEDTALLAAPNEFAKEILETRLRTVISQALSAELGREIRVAVTVDPSAVPPSAPTEEASSTSSPDSSHPAPDQGSASYSGPRDTARQQAWSQQPVLPDPQPTAPQFTPSGRPGPLPGEPFSRGPDLLSSGWNPSSADPGSPASPAPVAESDTGPRYQSWDTSAPHWDQPNRWETPRPWEGGPHPGAGNRPHDVGGDSGVPSAEQPPVTPPLGVTERGDGSTNPTSGGPDQLNPKYTFDTFVIGSSNRFAHAAAVAVAEAPAKAYNPLFVYGGSGLGKTHLLHAIGHYTQRLYEGARVRYVSSEEFTNEFINSIRDGKADGFRRRYRDIDVLLVDDIQFLENKEQTQEEFFHTFNTLHNSNKQIVISSDRPPKQLVTLEDRLRNRFEWGLITDVQPPELETRIAILRKKAAQEGLNAPPEVLEFIASKISTNIRELEGALIRVTAFASLNRQSVDLHLTSIVLRDLIPNDEVPEITAAEIMAQTASYFGLTPEDLCGTSRSRVLVTARQIAMYLCRELTDLSLPKIGQQFGRDHTTVMHADRKIRSLMAERRSIYNQVTELTNRIKQQAHHNHHHL</sequence>
<keyword id="KW-0067">ATP-binding</keyword>
<keyword id="KW-0963">Cytoplasm</keyword>
<keyword id="KW-0235">DNA replication</keyword>
<keyword id="KW-0238">DNA-binding</keyword>
<keyword id="KW-0446">Lipid-binding</keyword>
<keyword id="KW-0547">Nucleotide-binding</keyword>
<reference key="1">
    <citation type="journal article" date="2007" name="J. Bacteriol.">
        <title>Genome sequence and analysis of the soil cellulolytic actinomycete Thermobifida fusca YX.</title>
        <authorList>
            <person name="Lykidis A."/>
            <person name="Mavromatis K."/>
            <person name="Ivanova N."/>
            <person name="Anderson I."/>
            <person name="Land M."/>
            <person name="DiBartolo G."/>
            <person name="Martinez M."/>
            <person name="Lapidus A."/>
            <person name="Lucas S."/>
            <person name="Copeland A."/>
            <person name="Richardson P."/>
            <person name="Wilson D.B."/>
            <person name="Kyrpides N."/>
        </authorList>
    </citation>
    <scope>NUCLEOTIDE SEQUENCE [LARGE SCALE GENOMIC DNA]</scope>
    <source>
        <strain>YX</strain>
    </source>
</reference>
<feature type="chain" id="PRO_1000048751" description="Chromosomal replication initiator protein DnaA">
    <location>
        <begin position="1"/>
        <end position="615"/>
    </location>
</feature>
<feature type="region of interest" description="Domain I, interacts with DnaA modulators" evidence="1">
    <location>
        <begin position="1"/>
        <end position="88"/>
    </location>
</feature>
<feature type="region of interest" description="Disordered" evidence="2">
    <location>
        <begin position="85"/>
        <end position="272"/>
    </location>
</feature>
<feature type="region of interest" description="Domain II" evidence="1">
    <location>
        <begin position="88"/>
        <end position="269"/>
    </location>
</feature>
<feature type="region of interest" description="Domain III, AAA+ region" evidence="1">
    <location>
        <begin position="270"/>
        <end position="486"/>
    </location>
</feature>
<feature type="region of interest" description="Domain IV, binds dsDNA" evidence="1">
    <location>
        <begin position="487"/>
        <end position="615"/>
    </location>
</feature>
<feature type="compositionally biased region" description="Low complexity" evidence="2">
    <location>
        <begin position="94"/>
        <end position="112"/>
    </location>
</feature>
<feature type="compositionally biased region" description="Low complexity" evidence="2">
    <location>
        <begin position="173"/>
        <end position="190"/>
    </location>
</feature>
<feature type="binding site" evidence="1">
    <location>
        <position position="314"/>
    </location>
    <ligand>
        <name>ATP</name>
        <dbReference type="ChEBI" id="CHEBI:30616"/>
    </ligand>
</feature>
<feature type="binding site" evidence="1">
    <location>
        <position position="316"/>
    </location>
    <ligand>
        <name>ATP</name>
        <dbReference type="ChEBI" id="CHEBI:30616"/>
    </ligand>
</feature>
<feature type="binding site" evidence="1">
    <location>
        <position position="317"/>
    </location>
    <ligand>
        <name>ATP</name>
        <dbReference type="ChEBI" id="CHEBI:30616"/>
    </ligand>
</feature>
<feature type="binding site" evidence="1">
    <location>
        <position position="318"/>
    </location>
    <ligand>
        <name>ATP</name>
        <dbReference type="ChEBI" id="CHEBI:30616"/>
    </ligand>
</feature>
<protein>
    <recommendedName>
        <fullName evidence="1">Chromosomal replication initiator protein DnaA</fullName>
    </recommendedName>
</protein>
<name>DNAA_THEFY</name>
<evidence type="ECO:0000255" key="1">
    <source>
        <dbReference type="HAMAP-Rule" id="MF_00377"/>
    </source>
</evidence>
<evidence type="ECO:0000256" key="2">
    <source>
        <dbReference type="SAM" id="MobiDB-lite"/>
    </source>
</evidence>
<dbReference type="EMBL" id="CP000088">
    <property type="protein sequence ID" value="AAZ54041.1"/>
    <property type="molecule type" value="Genomic_DNA"/>
</dbReference>
<dbReference type="RefSeq" id="WP_011290450.1">
    <property type="nucleotide sequence ID" value="NC_007333.1"/>
</dbReference>
<dbReference type="SMR" id="Q47U23"/>
<dbReference type="STRING" id="269800.Tfu_0001"/>
<dbReference type="KEGG" id="tfu:Tfu_0001"/>
<dbReference type="eggNOG" id="COG0593">
    <property type="taxonomic scope" value="Bacteria"/>
</dbReference>
<dbReference type="HOGENOM" id="CLU_026910_2_0_11"/>
<dbReference type="OrthoDB" id="9807019at2"/>
<dbReference type="GO" id="GO:0005737">
    <property type="term" value="C:cytoplasm"/>
    <property type="evidence" value="ECO:0007669"/>
    <property type="project" value="UniProtKB-SubCell"/>
</dbReference>
<dbReference type="GO" id="GO:0005886">
    <property type="term" value="C:plasma membrane"/>
    <property type="evidence" value="ECO:0007669"/>
    <property type="project" value="TreeGrafter"/>
</dbReference>
<dbReference type="GO" id="GO:0005524">
    <property type="term" value="F:ATP binding"/>
    <property type="evidence" value="ECO:0007669"/>
    <property type="project" value="UniProtKB-UniRule"/>
</dbReference>
<dbReference type="GO" id="GO:0016887">
    <property type="term" value="F:ATP hydrolysis activity"/>
    <property type="evidence" value="ECO:0007669"/>
    <property type="project" value="InterPro"/>
</dbReference>
<dbReference type="GO" id="GO:0003688">
    <property type="term" value="F:DNA replication origin binding"/>
    <property type="evidence" value="ECO:0007669"/>
    <property type="project" value="UniProtKB-UniRule"/>
</dbReference>
<dbReference type="GO" id="GO:0008289">
    <property type="term" value="F:lipid binding"/>
    <property type="evidence" value="ECO:0007669"/>
    <property type="project" value="UniProtKB-KW"/>
</dbReference>
<dbReference type="GO" id="GO:0006270">
    <property type="term" value="P:DNA replication initiation"/>
    <property type="evidence" value="ECO:0007669"/>
    <property type="project" value="UniProtKB-UniRule"/>
</dbReference>
<dbReference type="GO" id="GO:0006275">
    <property type="term" value="P:regulation of DNA replication"/>
    <property type="evidence" value="ECO:0007669"/>
    <property type="project" value="UniProtKB-UniRule"/>
</dbReference>
<dbReference type="CDD" id="cd00009">
    <property type="entry name" value="AAA"/>
    <property type="match status" value="1"/>
</dbReference>
<dbReference type="CDD" id="cd06571">
    <property type="entry name" value="Bac_DnaA_C"/>
    <property type="match status" value="1"/>
</dbReference>
<dbReference type="FunFam" id="1.10.1750.10:FF:000002">
    <property type="entry name" value="Chromosomal replication initiator protein DnaA"/>
    <property type="match status" value="1"/>
</dbReference>
<dbReference type="FunFam" id="1.10.8.60:FF:000003">
    <property type="entry name" value="Chromosomal replication initiator protein DnaA"/>
    <property type="match status" value="1"/>
</dbReference>
<dbReference type="FunFam" id="3.40.50.300:FF:000150">
    <property type="entry name" value="Chromosomal replication initiator protein DnaA"/>
    <property type="match status" value="1"/>
</dbReference>
<dbReference type="Gene3D" id="1.10.1750.10">
    <property type="match status" value="1"/>
</dbReference>
<dbReference type="Gene3D" id="1.10.8.60">
    <property type="match status" value="1"/>
</dbReference>
<dbReference type="Gene3D" id="3.30.300.180">
    <property type="match status" value="1"/>
</dbReference>
<dbReference type="Gene3D" id="3.40.50.300">
    <property type="entry name" value="P-loop containing nucleotide triphosphate hydrolases"/>
    <property type="match status" value="1"/>
</dbReference>
<dbReference type="HAMAP" id="MF_00377">
    <property type="entry name" value="DnaA_bact"/>
    <property type="match status" value="1"/>
</dbReference>
<dbReference type="InterPro" id="IPR003593">
    <property type="entry name" value="AAA+_ATPase"/>
</dbReference>
<dbReference type="InterPro" id="IPR001957">
    <property type="entry name" value="Chromosome_initiator_DnaA"/>
</dbReference>
<dbReference type="InterPro" id="IPR020591">
    <property type="entry name" value="Chromosome_initiator_DnaA-like"/>
</dbReference>
<dbReference type="InterPro" id="IPR018312">
    <property type="entry name" value="Chromosome_initiator_DnaA_CS"/>
</dbReference>
<dbReference type="InterPro" id="IPR013159">
    <property type="entry name" value="DnaA_C"/>
</dbReference>
<dbReference type="InterPro" id="IPR013317">
    <property type="entry name" value="DnaA_dom"/>
</dbReference>
<dbReference type="InterPro" id="IPR024633">
    <property type="entry name" value="DnaA_N_dom"/>
</dbReference>
<dbReference type="InterPro" id="IPR038454">
    <property type="entry name" value="DnaA_N_sf"/>
</dbReference>
<dbReference type="InterPro" id="IPR027417">
    <property type="entry name" value="P-loop_NTPase"/>
</dbReference>
<dbReference type="InterPro" id="IPR010921">
    <property type="entry name" value="Trp_repressor/repl_initiator"/>
</dbReference>
<dbReference type="NCBIfam" id="TIGR00362">
    <property type="entry name" value="DnaA"/>
    <property type="match status" value="1"/>
</dbReference>
<dbReference type="NCBIfam" id="NF010686">
    <property type="entry name" value="PRK14086.1"/>
    <property type="match status" value="1"/>
</dbReference>
<dbReference type="PANTHER" id="PTHR30050">
    <property type="entry name" value="CHROMOSOMAL REPLICATION INITIATOR PROTEIN DNAA"/>
    <property type="match status" value="1"/>
</dbReference>
<dbReference type="PANTHER" id="PTHR30050:SF2">
    <property type="entry name" value="CHROMOSOMAL REPLICATION INITIATOR PROTEIN DNAA"/>
    <property type="match status" value="1"/>
</dbReference>
<dbReference type="Pfam" id="PF00308">
    <property type="entry name" value="Bac_DnaA"/>
    <property type="match status" value="1"/>
</dbReference>
<dbReference type="Pfam" id="PF08299">
    <property type="entry name" value="Bac_DnaA_C"/>
    <property type="match status" value="1"/>
</dbReference>
<dbReference type="Pfam" id="PF11638">
    <property type="entry name" value="DnaA_N"/>
    <property type="match status" value="1"/>
</dbReference>
<dbReference type="PRINTS" id="PR00051">
    <property type="entry name" value="DNAA"/>
</dbReference>
<dbReference type="SMART" id="SM00382">
    <property type="entry name" value="AAA"/>
    <property type="match status" value="1"/>
</dbReference>
<dbReference type="SMART" id="SM00760">
    <property type="entry name" value="Bac_DnaA_C"/>
    <property type="match status" value="1"/>
</dbReference>
<dbReference type="SUPFAM" id="SSF52540">
    <property type="entry name" value="P-loop containing nucleoside triphosphate hydrolases"/>
    <property type="match status" value="1"/>
</dbReference>
<dbReference type="SUPFAM" id="SSF48295">
    <property type="entry name" value="TrpR-like"/>
    <property type="match status" value="1"/>
</dbReference>
<dbReference type="PROSITE" id="PS01008">
    <property type="entry name" value="DNAA"/>
    <property type="match status" value="1"/>
</dbReference>
<comment type="function">
    <text evidence="1">Plays an essential role in the initiation and regulation of chromosomal replication. ATP-DnaA binds to the origin of replication (oriC) to initiate formation of the DNA replication initiation complex once per cell cycle. Binds the DnaA box (a 9 base pair repeat at the origin) and separates the double-stranded (ds)DNA. Forms a right-handed helical filament on oriC DNA; dsDNA binds to the exterior of the filament while single-stranded (ss)DNA is stabiized in the filament's interior. The ATP-DnaA-oriC complex binds and stabilizes one strand of the AT-rich DNA unwinding element (DUE), permitting loading of DNA polymerase. After initiation quickly degrades to an ADP-DnaA complex that is not apt for DNA replication. Binds acidic phospholipids.</text>
</comment>
<comment type="subunit">
    <text evidence="1">Oligomerizes as a right-handed, spiral filament on DNA at oriC.</text>
</comment>
<comment type="subcellular location">
    <subcellularLocation>
        <location evidence="1">Cytoplasm</location>
    </subcellularLocation>
</comment>
<comment type="domain">
    <text evidence="1">Domain I is involved in oligomerization and binding regulators, domain II is flexibile and of varying length in different bacteria, domain III forms the AAA+ region, while domain IV binds dsDNA.</text>
</comment>
<comment type="similarity">
    <text evidence="1">Belongs to the DnaA family.</text>
</comment>
<proteinExistence type="inferred from homology"/>
<gene>
    <name evidence="1" type="primary">dnaA</name>
    <name type="ordered locus">Tfu_0001</name>
</gene>
<organism>
    <name type="scientific">Thermobifida fusca (strain YX)</name>
    <dbReference type="NCBI Taxonomy" id="269800"/>
    <lineage>
        <taxon>Bacteria</taxon>
        <taxon>Bacillati</taxon>
        <taxon>Actinomycetota</taxon>
        <taxon>Actinomycetes</taxon>
        <taxon>Streptosporangiales</taxon>
        <taxon>Nocardiopsidaceae</taxon>
        <taxon>Thermobifida</taxon>
    </lineage>
</organism>
<accession>Q47U23</accession>